<protein>
    <recommendedName>
        <fullName>Uncharacterized protein MJ0274</fullName>
    </recommendedName>
</protein>
<feature type="chain" id="PRO_0000106766" description="Uncharacterized protein MJ0274">
    <location>
        <begin position="1"/>
        <end position="543"/>
    </location>
</feature>
<feature type="domain" description="Radical SAM core" evidence="2">
    <location>
        <begin position="203"/>
        <end position="460"/>
    </location>
</feature>
<feature type="domain" description="TRAM" evidence="1">
    <location>
        <begin position="470"/>
        <end position="534"/>
    </location>
</feature>
<proteinExistence type="predicted"/>
<evidence type="ECO:0000255" key="1">
    <source>
        <dbReference type="PROSITE-ProRule" id="PRU00208"/>
    </source>
</evidence>
<evidence type="ECO:0000255" key="2">
    <source>
        <dbReference type="PROSITE-ProRule" id="PRU01266"/>
    </source>
</evidence>
<dbReference type="EMBL" id="L77117">
    <property type="protein sequence ID" value="AAB98258.1"/>
    <property type="molecule type" value="Genomic_DNA"/>
</dbReference>
<dbReference type="PIR" id="C64334">
    <property type="entry name" value="C64334"/>
</dbReference>
<dbReference type="STRING" id="243232.MJ_0274"/>
<dbReference type="PaxDb" id="243232-MJ_0274"/>
<dbReference type="EnsemblBacteria" id="AAB98258">
    <property type="protein sequence ID" value="AAB98258"/>
    <property type="gene ID" value="MJ_0274"/>
</dbReference>
<dbReference type="KEGG" id="mja:MJ_0274"/>
<dbReference type="eggNOG" id="arCOG01359">
    <property type="taxonomic scope" value="Archaea"/>
</dbReference>
<dbReference type="HOGENOM" id="CLU_533842_0_0_2"/>
<dbReference type="InParanoid" id="Q57722"/>
<dbReference type="PhylomeDB" id="Q57722"/>
<dbReference type="Proteomes" id="UP000000805">
    <property type="component" value="Chromosome"/>
</dbReference>
<dbReference type="GO" id="GO:0051539">
    <property type="term" value="F:4 iron, 4 sulfur cluster binding"/>
    <property type="evidence" value="ECO:0007669"/>
    <property type="project" value="UniProtKB-KW"/>
</dbReference>
<dbReference type="GO" id="GO:0003824">
    <property type="term" value="F:catalytic activity"/>
    <property type="evidence" value="ECO:0007669"/>
    <property type="project" value="InterPro"/>
</dbReference>
<dbReference type="GO" id="GO:0046872">
    <property type="term" value="F:metal ion binding"/>
    <property type="evidence" value="ECO:0007669"/>
    <property type="project" value="UniProtKB-KW"/>
</dbReference>
<dbReference type="Gene3D" id="3.80.30.20">
    <property type="entry name" value="tm_1862 like domain"/>
    <property type="match status" value="1"/>
</dbReference>
<dbReference type="InterPro" id="IPR006638">
    <property type="entry name" value="Elp3/MiaA/NifB-like_rSAM"/>
</dbReference>
<dbReference type="InterPro" id="IPR007197">
    <property type="entry name" value="rSAM"/>
</dbReference>
<dbReference type="InterPro" id="IPR023404">
    <property type="entry name" value="rSAM_horseshoe"/>
</dbReference>
<dbReference type="InterPro" id="IPR002792">
    <property type="entry name" value="TRAM_dom"/>
</dbReference>
<dbReference type="PANTHER" id="PTHR43324">
    <property type="match status" value="1"/>
</dbReference>
<dbReference type="PANTHER" id="PTHR43324:SF1">
    <property type="entry name" value="RADICAL SAM CORE DOMAIN-CONTAINING PROTEIN"/>
    <property type="match status" value="1"/>
</dbReference>
<dbReference type="Pfam" id="PF04055">
    <property type="entry name" value="Radical_SAM"/>
    <property type="match status" value="1"/>
</dbReference>
<dbReference type="SFLD" id="SFLDG01082">
    <property type="entry name" value="B12-binding_domain_containing"/>
    <property type="match status" value="1"/>
</dbReference>
<dbReference type="SFLD" id="SFLDS00029">
    <property type="entry name" value="Radical_SAM"/>
    <property type="match status" value="1"/>
</dbReference>
<dbReference type="SMART" id="SM00729">
    <property type="entry name" value="Elp3"/>
    <property type="match status" value="1"/>
</dbReference>
<dbReference type="SUPFAM" id="SSF102114">
    <property type="entry name" value="Radical SAM enzymes"/>
    <property type="match status" value="1"/>
</dbReference>
<dbReference type="PROSITE" id="PS51918">
    <property type="entry name" value="RADICAL_SAM"/>
    <property type="match status" value="1"/>
</dbReference>
<dbReference type="PROSITE" id="PS50926">
    <property type="entry name" value="TRAM"/>
    <property type="match status" value="1"/>
</dbReference>
<reference key="1">
    <citation type="journal article" date="1996" name="Science">
        <title>Complete genome sequence of the methanogenic archaeon, Methanococcus jannaschii.</title>
        <authorList>
            <person name="Bult C.J."/>
            <person name="White O."/>
            <person name="Olsen G.J."/>
            <person name="Zhou L."/>
            <person name="Fleischmann R.D."/>
            <person name="Sutton G.G."/>
            <person name="Blake J.A."/>
            <person name="FitzGerald L.M."/>
            <person name="Clayton R.A."/>
            <person name="Gocayne J.D."/>
            <person name="Kerlavage A.R."/>
            <person name="Dougherty B.A."/>
            <person name="Tomb J.-F."/>
            <person name="Adams M.D."/>
            <person name="Reich C.I."/>
            <person name="Overbeek R."/>
            <person name="Kirkness E.F."/>
            <person name="Weinstock K.G."/>
            <person name="Merrick J.M."/>
            <person name="Glodek A."/>
            <person name="Scott J.L."/>
            <person name="Geoghagen N.S.M."/>
            <person name="Weidman J.F."/>
            <person name="Fuhrmann J.L."/>
            <person name="Nguyen D."/>
            <person name="Utterback T.R."/>
            <person name="Kelley J.M."/>
            <person name="Peterson J.D."/>
            <person name="Sadow P.W."/>
            <person name="Hanna M.C."/>
            <person name="Cotton M.D."/>
            <person name="Roberts K.M."/>
            <person name="Hurst M.A."/>
            <person name="Kaine B.P."/>
            <person name="Borodovsky M."/>
            <person name="Klenk H.-P."/>
            <person name="Fraser C.M."/>
            <person name="Smith H.O."/>
            <person name="Woese C.R."/>
            <person name="Venter J.C."/>
        </authorList>
    </citation>
    <scope>NUCLEOTIDE SEQUENCE [LARGE SCALE GENOMIC DNA]</scope>
    <source>
        <strain>ATCC 43067 / DSM 2661 / JAL-1 / JCM 10045 / NBRC 100440</strain>
    </source>
</reference>
<name>Y274_METJA</name>
<keyword id="KW-0004">4Fe-4S</keyword>
<keyword id="KW-0408">Iron</keyword>
<keyword id="KW-0411">Iron-sulfur</keyword>
<keyword id="KW-0479">Metal-binding</keyword>
<keyword id="KW-1185">Reference proteome</keyword>
<keyword id="KW-0949">S-adenosyl-L-methionine</keyword>
<accession>Q57722</accession>
<sequence length="543" mass="62048">MLIRFITDSAKPIVIIGDFLVIIMMIGRALILDGYTDEPAGLGVPPYIGIYPRYAYGALDKYNVKVDYITIDKFREIRGDFNLNKYDAIICICGFHTPGKYLNANPATLKEFVSILYKYDGLKILGGPAATKYGSSMIGGKIEDESKYKAFFDVVAEGDLEAVLNDLLREGSIEKIDFNRYRTYEELREYAIRGAKVVKKHPNYPYIIAEIETYRGCPRALTGGCSFCTEPRRFGLPKFRDEKDIIDEIKVLYNEGIKYFRIGRQPCMFSYKSIDSEKEEVPKPNVEAIEKLFKGIRNVSNPKVLHIDNANPAVIARHEDESREVAKILVKYCTSGNVAAFGVESFDEKVIKANNLLTTPEDVLKAVEILNEVGGKRGETGLPYLLPGINLLFGLKGERKETFTINFEYLKEIYDRGFMIRRINIRQVVPFFGTDITLKDIKKAEKRKKLFLWFKEKVREEIDNKMLKRVVPKGTILRDVFVEVKEREDLYFGRQFGSYPLLVGILDKNLKIGEFVDVEVVDYGRRSITGKVVRDIRKIHIVG</sequence>
<gene>
    <name type="ordered locus">MJ0274</name>
</gene>
<organism>
    <name type="scientific">Methanocaldococcus jannaschii (strain ATCC 43067 / DSM 2661 / JAL-1 / JCM 10045 / NBRC 100440)</name>
    <name type="common">Methanococcus jannaschii</name>
    <dbReference type="NCBI Taxonomy" id="243232"/>
    <lineage>
        <taxon>Archaea</taxon>
        <taxon>Methanobacteriati</taxon>
        <taxon>Methanobacteriota</taxon>
        <taxon>Methanomada group</taxon>
        <taxon>Methanococci</taxon>
        <taxon>Methanococcales</taxon>
        <taxon>Methanocaldococcaceae</taxon>
        <taxon>Methanocaldococcus</taxon>
    </lineage>
</organism>